<gene>
    <name evidence="1" type="primary">thiC</name>
    <name type="ordered locus">DIP0029</name>
</gene>
<protein>
    <recommendedName>
        <fullName evidence="1">Phosphomethylpyrimidine synthase</fullName>
        <ecNumber evidence="1">4.1.99.17</ecNumber>
    </recommendedName>
    <alternativeName>
        <fullName evidence="1">Hydroxymethylpyrimidine phosphate synthase</fullName>
        <shortName evidence="1">HMP-P synthase</shortName>
        <shortName evidence="1">HMP-phosphate synthase</shortName>
        <shortName evidence="1">HMPP synthase</shortName>
    </alternativeName>
    <alternativeName>
        <fullName evidence="1">Thiamine biosynthesis protein ThiC</fullName>
    </alternativeName>
</protein>
<feature type="chain" id="PRO_0000152799" description="Phosphomethylpyrimidine synthase">
    <location>
        <begin position="1"/>
        <end position="599"/>
    </location>
</feature>
<feature type="region of interest" description="Disordered" evidence="2">
    <location>
        <begin position="1"/>
        <end position="53"/>
    </location>
</feature>
<feature type="region of interest" description="Disordered" evidence="2">
    <location>
        <begin position="82"/>
        <end position="108"/>
    </location>
</feature>
<feature type="compositionally biased region" description="Polar residues" evidence="2">
    <location>
        <begin position="1"/>
        <end position="16"/>
    </location>
</feature>
<feature type="compositionally biased region" description="Basic and acidic residues" evidence="2">
    <location>
        <begin position="87"/>
        <end position="100"/>
    </location>
</feature>
<feature type="binding site" evidence="1">
    <location>
        <position position="192"/>
    </location>
    <ligand>
        <name>substrate</name>
    </ligand>
</feature>
<feature type="binding site" evidence="1">
    <location>
        <position position="221"/>
    </location>
    <ligand>
        <name>substrate</name>
    </ligand>
</feature>
<feature type="binding site" evidence="1">
    <location>
        <position position="250"/>
    </location>
    <ligand>
        <name>substrate</name>
    </ligand>
</feature>
<feature type="binding site" evidence="1">
    <location>
        <position position="286"/>
    </location>
    <ligand>
        <name>substrate</name>
    </ligand>
</feature>
<feature type="binding site" evidence="1">
    <location>
        <begin position="306"/>
        <end position="308"/>
    </location>
    <ligand>
        <name>substrate</name>
    </ligand>
</feature>
<feature type="binding site" evidence="1">
    <location>
        <begin position="347"/>
        <end position="350"/>
    </location>
    <ligand>
        <name>substrate</name>
    </ligand>
</feature>
<feature type="binding site" evidence="1">
    <location>
        <position position="386"/>
    </location>
    <ligand>
        <name>substrate</name>
    </ligand>
</feature>
<feature type="binding site" evidence="1">
    <location>
        <position position="390"/>
    </location>
    <ligand>
        <name>Zn(2+)</name>
        <dbReference type="ChEBI" id="CHEBI:29105"/>
    </ligand>
</feature>
<feature type="binding site" evidence="1">
    <location>
        <position position="413"/>
    </location>
    <ligand>
        <name>substrate</name>
    </ligand>
</feature>
<feature type="binding site" evidence="1">
    <location>
        <position position="454"/>
    </location>
    <ligand>
        <name>Zn(2+)</name>
        <dbReference type="ChEBI" id="CHEBI:29105"/>
    </ligand>
</feature>
<feature type="binding site" evidence="1">
    <location>
        <position position="534"/>
    </location>
    <ligand>
        <name>[4Fe-4S] cluster</name>
        <dbReference type="ChEBI" id="CHEBI:49883"/>
        <note>4Fe-4S-S-AdoMet</note>
    </ligand>
</feature>
<feature type="binding site" evidence="1">
    <location>
        <position position="537"/>
    </location>
    <ligand>
        <name>[4Fe-4S] cluster</name>
        <dbReference type="ChEBI" id="CHEBI:49883"/>
        <note>4Fe-4S-S-AdoMet</note>
    </ligand>
</feature>
<feature type="binding site" evidence="1">
    <location>
        <position position="542"/>
    </location>
    <ligand>
        <name>[4Fe-4S] cluster</name>
        <dbReference type="ChEBI" id="CHEBI:49883"/>
        <note>4Fe-4S-S-AdoMet</note>
    </ligand>
</feature>
<proteinExistence type="inferred from homology"/>
<sequence>MSAASANSVTNPSAWENSEIHPKHSYSPIVSGDLEVPETEIQLDDSPTGPNDPVRIYRTRGPECDPTVGLKPLRAQWIDSREDTEEYAGRERNLADDGRSAQRRGAASLEWKGVKPTPRRAKQGKRVTQMHYARQGIITKEMEFVALREHMDPEFVRSEIARGRAIIPNNINHPESEPMIIGRKFLTKINANIGNSAVTSSIEEEVSKLRWATRWGADTVMDLSTGDDIHTTREWIIRNSPVPIGTVPIYQALEKVNGVAEDLTWEIFRDTVIEQCEQGVDYMTIHAGVLLAYIPLTTKRITGIVSRGGSIMAGWCLAHHKESFLYEHFDELCEIFAQYDVAFSLGDGLRPGSVADANDAAQFAELKTIGELARRAWEYDVQVMIEGPGHVPLNMVQENNELEQKWAHDAPFYTLGPLVTDIAPGYDHITSAIGAAHIAMGGTAMLCYVTPKEHLGLPNRDDVKTGVITYKLAAHAADVAKGHPGARAWDDAMSKARFEFRWHDQFALSLDPDTAIAYHDETLPAEPAKTAHFCSMCGPKFCSMRISQDIRDMFADKIADLGIPQVGGDAEAGMAAKSEEFVAQGSQLYSEVRDNAAHA</sequence>
<accession>P61424</accession>
<keyword id="KW-0004">4Fe-4S</keyword>
<keyword id="KW-0408">Iron</keyword>
<keyword id="KW-0411">Iron-sulfur</keyword>
<keyword id="KW-0456">Lyase</keyword>
<keyword id="KW-0479">Metal-binding</keyword>
<keyword id="KW-1185">Reference proteome</keyword>
<keyword id="KW-0949">S-adenosyl-L-methionine</keyword>
<keyword id="KW-0784">Thiamine biosynthesis</keyword>
<keyword id="KW-0862">Zinc</keyword>
<evidence type="ECO:0000255" key="1">
    <source>
        <dbReference type="HAMAP-Rule" id="MF_00089"/>
    </source>
</evidence>
<evidence type="ECO:0000256" key="2">
    <source>
        <dbReference type="SAM" id="MobiDB-lite"/>
    </source>
</evidence>
<organism>
    <name type="scientific">Corynebacterium diphtheriae (strain ATCC 700971 / NCTC 13129 / Biotype gravis)</name>
    <dbReference type="NCBI Taxonomy" id="257309"/>
    <lineage>
        <taxon>Bacteria</taxon>
        <taxon>Bacillati</taxon>
        <taxon>Actinomycetota</taxon>
        <taxon>Actinomycetes</taxon>
        <taxon>Mycobacteriales</taxon>
        <taxon>Corynebacteriaceae</taxon>
        <taxon>Corynebacterium</taxon>
    </lineage>
</organism>
<name>THIC_CORDI</name>
<comment type="function">
    <text evidence="1">Catalyzes the synthesis of the hydroxymethylpyrimidine phosphate (HMP-P) moiety of thiamine from aminoimidazole ribotide (AIR) in a radical S-adenosyl-L-methionine (SAM)-dependent reaction.</text>
</comment>
<comment type="catalytic activity">
    <reaction evidence="1">
        <text>5-amino-1-(5-phospho-beta-D-ribosyl)imidazole + S-adenosyl-L-methionine = 4-amino-2-methyl-5-(phosphooxymethyl)pyrimidine + CO + 5'-deoxyadenosine + formate + L-methionine + 3 H(+)</text>
        <dbReference type="Rhea" id="RHEA:24840"/>
        <dbReference type="ChEBI" id="CHEBI:15378"/>
        <dbReference type="ChEBI" id="CHEBI:15740"/>
        <dbReference type="ChEBI" id="CHEBI:17245"/>
        <dbReference type="ChEBI" id="CHEBI:17319"/>
        <dbReference type="ChEBI" id="CHEBI:57844"/>
        <dbReference type="ChEBI" id="CHEBI:58354"/>
        <dbReference type="ChEBI" id="CHEBI:59789"/>
        <dbReference type="ChEBI" id="CHEBI:137981"/>
        <dbReference type="EC" id="4.1.99.17"/>
    </reaction>
</comment>
<comment type="cofactor">
    <cofactor evidence="1">
        <name>[4Fe-4S] cluster</name>
        <dbReference type="ChEBI" id="CHEBI:49883"/>
    </cofactor>
    <text evidence="1">Binds 1 [4Fe-4S] cluster per subunit. The cluster is coordinated with 3 cysteines and an exchangeable S-adenosyl-L-methionine.</text>
</comment>
<comment type="pathway">
    <text evidence="1">Cofactor biosynthesis; thiamine diphosphate biosynthesis.</text>
</comment>
<comment type="similarity">
    <text evidence="1">Belongs to the ThiC family.</text>
</comment>
<reference key="1">
    <citation type="journal article" date="2003" name="Nucleic Acids Res.">
        <title>The complete genome sequence and analysis of Corynebacterium diphtheriae NCTC13129.</title>
        <authorList>
            <person name="Cerdeno-Tarraga A.-M."/>
            <person name="Efstratiou A."/>
            <person name="Dover L.G."/>
            <person name="Holden M.T.G."/>
            <person name="Pallen M.J."/>
            <person name="Bentley S.D."/>
            <person name="Besra G.S."/>
            <person name="Churcher C.M."/>
            <person name="James K.D."/>
            <person name="De Zoysa A."/>
            <person name="Chillingworth T."/>
            <person name="Cronin A."/>
            <person name="Dowd L."/>
            <person name="Feltwell T."/>
            <person name="Hamlin N."/>
            <person name="Holroyd S."/>
            <person name="Jagels K."/>
            <person name="Moule S."/>
            <person name="Quail M.A."/>
            <person name="Rabbinowitsch E."/>
            <person name="Rutherford K.M."/>
            <person name="Thomson N.R."/>
            <person name="Unwin L."/>
            <person name="Whitehead S."/>
            <person name="Barrell B.G."/>
            <person name="Parkhill J."/>
        </authorList>
    </citation>
    <scope>NUCLEOTIDE SEQUENCE [LARGE SCALE GENOMIC DNA]</scope>
    <source>
        <strain>ATCC 700971 / NCTC 13129 / Biotype gravis</strain>
    </source>
</reference>
<dbReference type="EC" id="4.1.99.17" evidence="1"/>
<dbReference type="EMBL" id="BX248354">
    <property type="protein sequence ID" value="CAE48540.1"/>
    <property type="molecule type" value="Genomic_DNA"/>
</dbReference>
<dbReference type="RefSeq" id="WP_010933961.1">
    <property type="nucleotide sequence ID" value="NC_002935.2"/>
</dbReference>
<dbReference type="SMR" id="P61424"/>
<dbReference type="STRING" id="257309.DIP0029"/>
<dbReference type="KEGG" id="cdi:DIP0029"/>
<dbReference type="HOGENOM" id="CLU_013181_2_1_11"/>
<dbReference type="UniPathway" id="UPA00060"/>
<dbReference type="Proteomes" id="UP000002198">
    <property type="component" value="Chromosome"/>
</dbReference>
<dbReference type="GO" id="GO:0005829">
    <property type="term" value="C:cytosol"/>
    <property type="evidence" value="ECO:0007669"/>
    <property type="project" value="TreeGrafter"/>
</dbReference>
<dbReference type="GO" id="GO:0051539">
    <property type="term" value="F:4 iron, 4 sulfur cluster binding"/>
    <property type="evidence" value="ECO:0007669"/>
    <property type="project" value="UniProtKB-KW"/>
</dbReference>
<dbReference type="GO" id="GO:0016830">
    <property type="term" value="F:carbon-carbon lyase activity"/>
    <property type="evidence" value="ECO:0007669"/>
    <property type="project" value="InterPro"/>
</dbReference>
<dbReference type="GO" id="GO:0008270">
    <property type="term" value="F:zinc ion binding"/>
    <property type="evidence" value="ECO:0007669"/>
    <property type="project" value="UniProtKB-UniRule"/>
</dbReference>
<dbReference type="GO" id="GO:0009228">
    <property type="term" value="P:thiamine biosynthetic process"/>
    <property type="evidence" value="ECO:0007669"/>
    <property type="project" value="UniProtKB-KW"/>
</dbReference>
<dbReference type="GO" id="GO:0009229">
    <property type="term" value="P:thiamine diphosphate biosynthetic process"/>
    <property type="evidence" value="ECO:0007669"/>
    <property type="project" value="UniProtKB-UniRule"/>
</dbReference>
<dbReference type="FunFam" id="3.20.20.540:FF:000001">
    <property type="entry name" value="Phosphomethylpyrimidine synthase"/>
    <property type="match status" value="1"/>
</dbReference>
<dbReference type="Gene3D" id="6.10.250.620">
    <property type="match status" value="1"/>
</dbReference>
<dbReference type="Gene3D" id="3.20.20.540">
    <property type="entry name" value="Radical SAM ThiC family, central domain"/>
    <property type="match status" value="1"/>
</dbReference>
<dbReference type="HAMAP" id="MF_00089">
    <property type="entry name" value="ThiC"/>
    <property type="match status" value="1"/>
</dbReference>
<dbReference type="InterPro" id="IPR037509">
    <property type="entry name" value="ThiC"/>
</dbReference>
<dbReference type="InterPro" id="IPR025747">
    <property type="entry name" value="ThiC-associated_dom"/>
</dbReference>
<dbReference type="InterPro" id="IPR038521">
    <property type="entry name" value="ThiC/Bza_core_dom"/>
</dbReference>
<dbReference type="InterPro" id="IPR002817">
    <property type="entry name" value="ThiC/BzaA/B"/>
</dbReference>
<dbReference type="NCBIfam" id="NF006763">
    <property type="entry name" value="PRK09284.1"/>
    <property type="match status" value="1"/>
</dbReference>
<dbReference type="NCBIfam" id="NF009895">
    <property type="entry name" value="PRK13352.1"/>
    <property type="match status" value="1"/>
</dbReference>
<dbReference type="NCBIfam" id="TIGR00190">
    <property type="entry name" value="thiC"/>
    <property type="match status" value="1"/>
</dbReference>
<dbReference type="PANTHER" id="PTHR30557:SF1">
    <property type="entry name" value="PHOSPHOMETHYLPYRIMIDINE SYNTHASE, CHLOROPLASTIC"/>
    <property type="match status" value="1"/>
</dbReference>
<dbReference type="PANTHER" id="PTHR30557">
    <property type="entry name" value="THIAMINE BIOSYNTHESIS PROTEIN THIC"/>
    <property type="match status" value="1"/>
</dbReference>
<dbReference type="Pfam" id="PF13667">
    <property type="entry name" value="ThiC-associated"/>
    <property type="match status" value="1"/>
</dbReference>
<dbReference type="Pfam" id="PF01964">
    <property type="entry name" value="ThiC_Rad_SAM"/>
    <property type="match status" value="1"/>
</dbReference>
<dbReference type="SFLD" id="SFLDF00407">
    <property type="entry name" value="phosphomethylpyrimidine_syntha"/>
    <property type="match status" value="1"/>
</dbReference>
<dbReference type="SFLD" id="SFLDG01114">
    <property type="entry name" value="phosphomethylpyrimidine_syntha"/>
    <property type="match status" value="1"/>
</dbReference>
<dbReference type="SFLD" id="SFLDS00113">
    <property type="entry name" value="Radical_SAM_Phosphomethylpyrim"/>
    <property type="match status" value="1"/>
</dbReference>